<sequence length="260" mass="29085">MAFVPPQAGYDRAITVFSPDGRLFQVNYAREAVKRGATAVGVKWKEGVVLAVEKRITSKLIEPSSYEKIFQIDDHIAAAPSGIIADARVLVDRARLEAQVYRLTYGEPVPLTVLVKKICDLKQAHTQYGGVRPFGAALLMAGVNDKPELYETDPSGAYFEWRAVAIGSGRNTAMAIFEDHYSDDLDMEGAIKLAILALAKTLEEPSPESIEVAYITMKDKRWKKMDKEEVAKYLGEILEEIKEEEVEEKEEDYSELDSNY</sequence>
<proteinExistence type="inferred from homology"/>
<comment type="function">
    <text evidence="1">Component of the proteasome core, a large protease complex with broad specificity involved in protein degradation.</text>
</comment>
<comment type="activity regulation">
    <text evidence="1">The formation of the proteasomal ATPase PAN-20S proteasome complex, via the docking of the C-termini of PAN into the intersubunit pockets in the alpha-rings, triggers opening of the gate for substrate entry. Interconversion between the open-gate and close-gate conformations leads to a dynamic regulation of the 20S proteasome proteolysis activity.</text>
</comment>
<comment type="subunit">
    <text evidence="1">The 20S proteasome core is composed of 14 alpha and 14 beta subunits that assemble into four stacked heptameric rings, resulting in a barrel-shaped structure. The two inner rings, each composed of seven catalytic beta subunits, are sandwiched by two outer rings, each composed of seven alpha subunits. The catalytic chamber with the active sites is on the inside of the barrel. Has a gated structure, the ends of the cylinder being occluded by the N-termini of the alpha-subunits. Is capped at one or both ends by the proteasome regulatory ATPase, PAN.</text>
</comment>
<comment type="subcellular location">
    <subcellularLocation>
        <location evidence="1">Cytoplasm</location>
    </subcellularLocation>
</comment>
<comment type="similarity">
    <text evidence="1">Belongs to the peptidase T1A family.</text>
</comment>
<organism>
    <name type="scientific">Thermococcus onnurineus (strain NA1)</name>
    <dbReference type="NCBI Taxonomy" id="523850"/>
    <lineage>
        <taxon>Archaea</taxon>
        <taxon>Methanobacteriati</taxon>
        <taxon>Methanobacteriota</taxon>
        <taxon>Thermococci</taxon>
        <taxon>Thermococcales</taxon>
        <taxon>Thermococcaceae</taxon>
        <taxon>Thermococcus</taxon>
    </lineage>
</organism>
<gene>
    <name evidence="1" type="primary">psmA</name>
    <name type="ordered locus">TON_0027</name>
</gene>
<feature type="chain" id="PRO_1000114974" description="Proteasome subunit alpha">
    <location>
        <begin position="1"/>
        <end position="260"/>
    </location>
</feature>
<name>PSA_THEON</name>
<evidence type="ECO:0000255" key="1">
    <source>
        <dbReference type="HAMAP-Rule" id="MF_00289"/>
    </source>
</evidence>
<accession>B6YSH9</accession>
<protein>
    <recommendedName>
        <fullName evidence="1">Proteasome subunit alpha</fullName>
    </recommendedName>
    <alternativeName>
        <fullName evidence="1">20S proteasome alpha subunit</fullName>
    </alternativeName>
    <alternativeName>
        <fullName evidence="1">Proteasome core protein PsmA</fullName>
    </alternativeName>
</protein>
<reference key="1">
    <citation type="journal article" date="2008" name="J. Bacteriol.">
        <title>The complete genome sequence of Thermococcus onnurineus NA1 reveals a mixed heterotrophic and carboxydotrophic metabolism.</title>
        <authorList>
            <person name="Lee H.S."/>
            <person name="Kang S.G."/>
            <person name="Bae S.S."/>
            <person name="Lim J.K."/>
            <person name="Cho Y."/>
            <person name="Kim Y.J."/>
            <person name="Jeon J.H."/>
            <person name="Cha S.-S."/>
            <person name="Kwon K.K."/>
            <person name="Kim H.-T."/>
            <person name="Park C.-J."/>
            <person name="Lee H.-W."/>
            <person name="Kim S.I."/>
            <person name="Chun J."/>
            <person name="Colwell R.R."/>
            <person name="Kim S.-J."/>
            <person name="Lee J.-H."/>
        </authorList>
    </citation>
    <scope>NUCLEOTIDE SEQUENCE [LARGE SCALE GENOMIC DNA]</scope>
    <source>
        <strain>NA1</strain>
    </source>
</reference>
<keyword id="KW-0963">Cytoplasm</keyword>
<keyword id="KW-0647">Proteasome</keyword>
<dbReference type="EMBL" id="CP000855">
    <property type="protein sequence ID" value="ACJ15511.1"/>
    <property type="molecule type" value="Genomic_DNA"/>
</dbReference>
<dbReference type="RefSeq" id="WP_012570984.1">
    <property type="nucleotide sequence ID" value="NC_011529.1"/>
</dbReference>
<dbReference type="SMR" id="B6YSH9"/>
<dbReference type="STRING" id="523850.TON_0027"/>
<dbReference type="GeneID" id="7017673"/>
<dbReference type="KEGG" id="ton:TON_0027"/>
<dbReference type="PATRIC" id="fig|523850.10.peg.27"/>
<dbReference type="eggNOG" id="arCOG00971">
    <property type="taxonomic scope" value="Archaea"/>
</dbReference>
<dbReference type="HOGENOM" id="CLU_035750_4_1_2"/>
<dbReference type="OrthoDB" id="9421at2157"/>
<dbReference type="Proteomes" id="UP000002727">
    <property type="component" value="Chromosome"/>
</dbReference>
<dbReference type="GO" id="GO:0005737">
    <property type="term" value="C:cytoplasm"/>
    <property type="evidence" value="ECO:0007669"/>
    <property type="project" value="UniProtKB-SubCell"/>
</dbReference>
<dbReference type="GO" id="GO:0019773">
    <property type="term" value="C:proteasome core complex, alpha-subunit complex"/>
    <property type="evidence" value="ECO:0000250"/>
    <property type="project" value="UniProtKB"/>
</dbReference>
<dbReference type="GO" id="GO:0004298">
    <property type="term" value="F:threonine-type endopeptidase activity"/>
    <property type="evidence" value="ECO:0007669"/>
    <property type="project" value="InterPro"/>
</dbReference>
<dbReference type="GO" id="GO:0010498">
    <property type="term" value="P:proteasomal protein catabolic process"/>
    <property type="evidence" value="ECO:0007669"/>
    <property type="project" value="UniProtKB-UniRule"/>
</dbReference>
<dbReference type="GO" id="GO:0006511">
    <property type="term" value="P:ubiquitin-dependent protein catabolic process"/>
    <property type="evidence" value="ECO:0007669"/>
    <property type="project" value="InterPro"/>
</dbReference>
<dbReference type="CDD" id="cd03756">
    <property type="entry name" value="proteasome_alpha_archeal"/>
    <property type="match status" value="1"/>
</dbReference>
<dbReference type="FunFam" id="3.60.20.10:FF:000004">
    <property type="entry name" value="Proteasome subunit alpha type-4"/>
    <property type="match status" value="1"/>
</dbReference>
<dbReference type="Gene3D" id="3.60.20.10">
    <property type="entry name" value="Glutamine Phosphoribosylpyrophosphate, subunit 1, domain 1"/>
    <property type="match status" value="1"/>
</dbReference>
<dbReference type="HAMAP" id="MF_00289_A">
    <property type="entry name" value="Proteasome_A_A"/>
    <property type="match status" value="1"/>
</dbReference>
<dbReference type="InterPro" id="IPR029055">
    <property type="entry name" value="Ntn_hydrolases_N"/>
</dbReference>
<dbReference type="InterPro" id="IPR050115">
    <property type="entry name" value="Proteasome_alpha"/>
</dbReference>
<dbReference type="InterPro" id="IPR023332">
    <property type="entry name" value="Proteasome_alpha-type"/>
</dbReference>
<dbReference type="InterPro" id="IPR019982">
    <property type="entry name" value="Proteasome_asu_arc"/>
</dbReference>
<dbReference type="InterPro" id="IPR000426">
    <property type="entry name" value="Proteasome_asu_N"/>
</dbReference>
<dbReference type="InterPro" id="IPR001353">
    <property type="entry name" value="Proteasome_sua/b"/>
</dbReference>
<dbReference type="NCBIfam" id="TIGR03633">
    <property type="entry name" value="arc_protsome_A"/>
    <property type="match status" value="1"/>
</dbReference>
<dbReference type="NCBIfam" id="NF003075">
    <property type="entry name" value="PRK03996.1"/>
    <property type="match status" value="1"/>
</dbReference>
<dbReference type="PANTHER" id="PTHR11599">
    <property type="entry name" value="PROTEASOME SUBUNIT ALPHA/BETA"/>
    <property type="match status" value="1"/>
</dbReference>
<dbReference type="Pfam" id="PF00227">
    <property type="entry name" value="Proteasome"/>
    <property type="match status" value="1"/>
</dbReference>
<dbReference type="Pfam" id="PF10584">
    <property type="entry name" value="Proteasome_A_N"/>
    <property type="match status" value="1"/>
</dbReference>
<dbReference type="SMART" id="SM00948">
    <property type="entry name" value="Proteasome_A_N"/>
    <property type="match status" value="1"/>
</dbReference>
<dbReference type="SUPFAM" id="SSF56235">
    <property type="entry name" value="N-terminal nucleophile aminohydrolases (Ntn hydrolases)"/>
    <property type="match status" value="1"/>
</dbReference>
<dbReference type="PROSITE" id="PS00388">
    <property type="entry name" value="PROTEASOME_ALPHA_1"/>
    <property type="match status" value="1"/>
</dbReference>
<dbReference type="PROSITE" id="PS51475">
    <property type="entry name" value="PROTEASOME_ALPHA_2"/>
    <property type="match status" value="1"/>
</dbReference>